<proteinExistence type="inferred from homology"/>
<gene>
    <name evidence="1" type="primary">NA</name>
</gene>
<evidence type="ECO:0000255" key="1">
    <source>
        <dbReference type="HAMAP-Rule" id="MF_04071"/>
    </source>
</evidence>
<dbReference type="EC" id="3.2.1.18" evidence="1"/>
<dbReference type="EMBL" id="CY034126">
    <property type="protein sequence ID" value="ACF54590.1"/>
    <property type="molecule type" value="Viral_cRNA"/>
</dbReference>
<dbReference type="SMR" id="B4URD9"/>
<dbReference type="CAZy" id="GH34">
    <property type="family name" value="Glycoside Hydrolase Family 34"/>
</dbReference>
<dbReference type="GlyCosmos" id="B4URD9">
    <property type="glycosylation" value="9 sites, No reported glycans"/>
</dbReference>
<dbReference type="PRO" id="PR:B4URD9"/>
<dbReference type="Proteomes" id="UP000008081">
    <property type="component" value="Genome"/>
</dbReference>
<dbReference type="GO" id="GO:0020002">
    <property type="term" value="C:host cell plasma membrane"/>
    <property type="evidence" value="ECO:0007669"/>
    <property type="project" value="UniProtKB-SubCell"/>
</dbReference>
<dbReference type="GO" id="GO:0016020">
    <property type="term" value="C:membrane"/>
    <property type="evidence" value="ECO:0007669"/>
    <property type="project" value="UniProtKB-UniRule"/>
</dbReference>
<dbReference type="GO" id="GO:0055036">
    <property type="term" value="C:virion membrane"/>
    <property type="evidence" value="ECO:0007669"/>
    <property type="project" value="UniProtKB-SubCell"/>
</dbReference>
<dbReference type="GO" id="GO:0004308">
    <property type="term" value="F:exo-alpha-sialidase activity"/>
    <property type="evidence" value="ECO:0007669"/>
    <property type="project" value="UniProtKB-UniRule"/>
</dbReference>
<dbReference type="GO" id="GO:0046872">
    <property type="term" value="F:metal ion binding"/>
    <property type="evidence" value="ECO:0007669"/>
    <property type="project" value="UniProtKB-UniRule"/>
</dbReference>
<dbReference type="GO" id="GO:0005975">
    <property type="term" value="P:carbohydrate metabolic process"/>
    <property type="evidence" value="ECO:0007669"/>
    <property type="project" value="InterPro"/>
</dbReference>
<dbReference type="GO" id="GO:0046761">
    <property type="term" value="P:viral budding from plasma membrane"/>
    <property type="evidence" value="ECO:0007669"/>
    <property type="project" value="UniProtKB-UniRule"/>
</dbReference>
<dbReference type="CDD" id="cd15483">
    <property type="entry name" value="Influenza_NA"/>
    <property type="match status" value="1"/>
</dbReference>
<dbReference type="FunFam" id="2.120.10.10:FF:000001">
    <property type="entry name" value="Neuraminidase"/>
    <property type="match status" value="1"/>
</dbReference>
<dbReference type="Gene3D" id="2.120.10.10">
    <property type="match status" value="1"/>
</dbReference>
<dbReference type="HAMAP" id="MF_04071">
    <property type="entry name" value="INFV_NRAM"/>
    <property type="match status" value="1"/>
</dbReference>
<dbReference type="InterPro" id="IPR001860">
    <property type="entry name" value="Glyco_hydro_34"/>
</dbReference>
<dbReference type="InterPro" id="IPR033654">
    <property type="entry name" value="Sialidase_Influenza_A/B"/>
</dbReference>
<dbReference type="InterPro" id="IPR036278">
    <property type="entry name" value="Sialidase_sf"/>
</dbReference>
<dbReference type="Pfam" id="PF00064">
    <property type="entry name" value="Neur"/>
    <property type="match status" value="1"/>
</dbReference>
<dbReference type="SUPFAM" id="SSF50939">
    <property type="entry name" value="Sialidases"/>
    <property type="match status" value="1"/>
</dbReference>
<accession>B4URD9</accession>
<sequence length="470" mass="51656">MNPNQKIITIGSISIAIGIISLMLQIGNIISIWASHSIQTGSQNHTGICNQRIITYENSTWVNHTYVNINNTNVVAGKDKTSVTLAGNSSLCSISGWAIYTKDNSIRIGSKGDVFVIREPFISCSHLECKTFFLTQGALLNDKHSNGTVKDRSPYRALMSCPLGEAPSPYNSKFESVAWSASACHDGMGWLTIGISGPDNGAVAVLKYNGIITGTIKSWKKQILRTQESECVCMNGSCFTIMTDGPSNGAASYKIFKIEKGKVTKSIELNAPNFHYEECSCYPDTGTVMCVCRDNWHGSNRPWVSFNQNLDYQIGYICSGVFGDNPRPKDREGSCNPVTIDGADGVKGFSYKYGNGVWIGRTKSNRLRKGFEMIWDPNGWTNTDSDFSVKQDVVAITDWSGYSGSFVQHPELTGLDCIRPCFWVELVRGLPRENTTIWTSGSSISFCGVNSDTANWSWPDGAELPFTIDK</sequence>
<organism>
    <name type="scientific">Influenza A virus (strain A/Russia:St.Petersburg/8/2006 H1N1)</name>
    <dbReference type="NCBI Taxonomy" id="518998"/>
    <lineage>
        <taxon>Viruses</taxon>
        <taxon>Riboviria</taxon>
        <taxon>Orthornavirae</taxon>
        <taxon>Negarnaviricota</taxon>
        <taxon>Polyploviricotina</taxon>
        <taxon>Insthoviricetes</taxon>
        <taxon>Articulavirales</taxon>
        <taxon>Orthomyxoviridae</taxon>
        <taxon>Alphainfluenzavirus</taxon>
        <taxon>Alphainfluenzavirus influenzae</taxon>
        <taxon>Influenza A virus</taxon>
    </lineage>
</organism>
<organismHost>
    <name type="scientific">Aves</name>
    <dbReference type="NCBI Taxonomy" id="8782"/>
</organismHost>
<organismHost>
    <name type="scientific">Homo sapiens</name>
    <name type="common">Human</name>
    <dbReference type="NCBI Taxonomy" id="9606"/>
</organismHost>
<organismHost>
    <name type="scientific">Sus scrofa</name>
    <name type="common">Pig</name>
    <dbReference type="NCBI Taxonomy" id="9823"/>
</organismHost>
<comment type="function">
    <text evidence="1">Catalyzes the removal of terminal sialic acid residues from viral and cellular glycoconjugates. Cleaves off the terminal sialic acids on the glycosylated HA during virus budding to facilitate virus release. Additionally helps virus spread through the circulation by further removing sialic acids from the cell surface. These cleavages prevent self-aggregation and ensure the efficient spread of the progeny virus from cell to cell. Otherwise, infection would be limited to one round of replication. Described as a receptor-destroying enzyme because it cleaves a terminal sialic acid from the cellular receptors. May facilitate viral invasion of the upper airways by cleaving the sialic acid moieties on the mucin of the airway epithelial cells. Likely to plays a role in the budding process through its association with lipid rafts during intracellular transport. May additionally display a raft-association independent effect on budding. Plays a role in the determination of host range restriction on replication and virulence. Sialidase activity in late endosome/lysosome traffic seems to enhance virus replication.</text>
</comment>
<comment type="catalytic activity">
    <reaction evidence="1">
        <text>Hydrolysis of alpha-(2-&gt;3)-, alpha-(2-&gt;6)-, alpha-(2-&gt;8)- glycosidic linkages of terminal sialic acid residues in oligosaccharides, glycoproteins, glycolipids, colominic acid and synthetic substrates.</text>
        <dbReference type="EC" id="3.2.1.18"/>
    </reaction>
</comment>
<comment type="cofactor">
    <cofactor evidence="1">
        <name>Ca(2+)</name>
        <dbReference type="ChEBI" id="CHEBI:29108"/>
    </cofactor>
</comment>
<comment type="activity regulation">
    <text evidence="1">Inhibited by the neuraminidase inhibitors zanamivir (Relenza) and oseltamivir (Tamiflu). These drugs interfere with the release of progeny virus from infected cells and are effective against all influenza strains. Resistance to neuraminidase inhibitors is quite rare.</text>
</comment>
<comment type="subunit">
    <text evidence="1">Homotetramer.</text>
</comment>
<comment type="subcellular location">
    <subcellularLocation>
        <location evidence="1">Virion membrane</location>
    </subcellularLocation>
    <subcellularLocation>
        <location evidence="1">Host apical cell membrane</location>
        <topology evidence="1">Single-pass type II membrane protein</topology>
    </subcellularLocation>
    <text evidence="1">Preferentially accumulates at the apical plasma membrane in infected polarized epithelial cells, which is the virus assembly site. Uses lipid rafts for cell surface transport and apical sorting. In the virion, forms a mushroom-shaped spike on the surface of the membrane.</text>
</comment>
<comment type="domain">
    <text evidence="1">Intact N-terminus is essential for virion morphogenesis. Possesses two apical sorting signals, one in the ectodomain, which is likely to be a glycan, and the other in the transmembrane domain. The transmembrane domain also plays a role in lipid raft association.</text>
</comment>
<comment type="PTM">
    <text evidence="1">N-glycosylated.</text>
</comment>
<comment type="miscellaneous">
    <text>The influenza A genome consist of 8 RNA segments. Genetic variation of hemagglutinin and/or neuraminidase genes results in the emergence of new influenza strains. The mechanism of variation can be the result of point mutations or the result of genetic reassortment between segments of two different strains.</text>
</comment>
<comment type="similarity">
    <text evidence="1">Belongs to the glycosyl hydrolase 34 family.</text>
</comment>
<keyword id="KW-0106">Calcium</keyword>
<keyword id="KW-1015">Disulfide bond</keyword>
<keyword id="KW-0325">Glycoprotein</keyword>
<keyword id="KW-0326">Glycosidase</keyword>
<keyword id="KW-1032">Host cell membrane</keyword>
<keyword id="KW-1043">Host membrane</keyword>
<keyword id="KW-0378">Hydrolase</keyword>
<keyword id="KW-0472">Membrane</keyword>
<keyword id="KW-0479">Metal-binding</keyword>
<keyword id="KW-0735">Signal-anchor</keyword>
<keyword id="KW-0812">Transmembrane</keyword>
<keyword id="KW-1133">Transmembrane helix</keyword>
<keyword id="KW-0946">Virion</keyword>
<protein>
    <recommendedName>
        <fullName evidence="1">Neuraminidase</fullName>
        <ecNumber evidence="1">3.2.1.18</ecNumber>
    </recommendedName>
</protein>
<feature type="chain" id="PRO_0000372962" description="Neuraminidase">
    <location>
        <begin position="1"/>
        <end position="470"/>
    </location>
</feature>
<feature type="topological domain" description="Intravirion" evidence="1">
    <location>
        <begin position="1"/>
        <end position="6"/>
    </location>
</feature>
<feature type="transmembrane region" description="Helical" evidence="1">
    <location>
        <begin position="7"/>
        <end position="27"/>
    </location>
</feature>
<feature type="topological domain" description="Virion surface" evidence="1">
    <location>
        <begin position="28"/>
        <end position="470"/>
    </location>
</feature>
<feature type="region of interest" description="Involved in apical transport and lipid raft association" evidence="1">
    <location>
        <begin position="11"/>
        <end position="33"/>
    </location>
</feature>
<feature type="region of interest" description="Hypervariable stalk region" evidence="1">
    <location>
        <begin position="36"/>
        <end position="90"/>
    </location>
</feature>
<feature type="region of interest" description="Head of neuraminidase" evidence="1">
    <location>
        <begin position="91"/>
        <end position="470"/>
    </location>
</feature>
<feature type="active site" description="Proton donor/acceptor" evidence="1">
    <location>
        <position position="151"/>
    </location>
</feature>
<feature type="active site" description="Nucleophile" evidence="1">
    <location>
        <position position="402"/>
    </location>
</feature>
<feature type="binding site" evidence="1">
    <location>
        <position position="118"/>
    </location>
    <ligand>
        <name>substrate</name>
    </ligand>
</feature>
<feature type="binding site" evidence="1">
    <location>
        <position position="152"/>
    </location>
    <ligand>
        <name>substrate</name>
    </ligand>
</feature>
<feature type="binding site" evidence="1">
    <location>
        <begin position="277"/>
        <end position="278"/>
    </location>
    <ligand>
        <name>substrate</name>
    </ligand>
</feature>
<feature type="binding site" evidence="1">
    <location>
        <position position="293"/>
    </location>
    <ligand>
        <name>substrate</name>
    </ligand>
</feature>
<feature type="binding site" evidence="1">
    <location>
        <position position="294"/>
    </location>
    <ligand>
        <name>Ca(2+)</name>
        <dbReference type="ChEBI" id="CHEBI:29108"/>
    </ligand>
</feature>
<feature type="binding site" evidence="1">
    <location>
        <position position="298"/>
    </location>
    <ligand>
        <name>Ca(2+)</name>
        <dbReference type="ChEBI" id="CHEBI:29108"/>
    </ligand>
</feature>
<feature type="binding site" evidence="1">
    <location>
        <position position="324"/>
    </location>
    <ligand>
        <name>Ca(2+)</name>
        <dbReference type="ChEBI" id="CHEBI:29108"/>
    </ligand>
</feature>
<feature type="binding site" evidence="1">
    <location>
        <position position="368"/>
    </location>
    <ligand>
        <name>substrate</name>
    </ligand>
</feature>
<feature type="glycosylation site" description="N-linked (GlcNAc...) asparagine; by host" evidence="1">
    <location>
        <position position="44"/>
    </location>
</feature>
<feature type="glycosylation site" description="N-linked (GlcNAc...) asparagine; by host" evidence="1">
    <location>
        <position position="58"/>
    </location>
</feature>
<feature type="glycosylation site" description="N-linked (GlcNAc...) asparagine; by host" evidence="1">
    <location>
        <position position="63"/>
    </location>
</feature>
<feature type="glycosylation site" description="N-linked (GlcNAc...) asparagine; by host" evidence="1">
    <location>
        <position position="70"/>
    </location>
</feature>
<feature type="glycosylation site" description="N-linked (GlcNAc...) asparagine; by host" evidence="1">
    <location>
        <position position="88"/>
    </location>
</feature>
<feature type="glycosylation site" description="N-linked (GlcNAc...) asparagine; by host" evidence="1">
    <location>
        <position position="146"/>
    </location>
</feature>
<feature type="glycosylation site" description="N-linked (GlcNAc...) asparagine; by host" evidence="1">
    <location>
        <position position="235"/>
    </location>
</feature>
<feature type="glycosylation site" description="N-linked (GlcNAc...) asparagine; by host" evidence="1">
    <location>
        <position position="434"/>
    </location>
</feature>
<feature type="glycosylation site" description="N-linked (GlcNAc...) asparagine; by host" evidence="1">
    <location>
        <position position="455"/>
    </location>
</feature>
<feature type="disulfide bond" evidence="1">
    <location>
        <begin position="92"/>
        <end position="417"/>
    </location>
</feature>
<feature type="disulfide bond" evidence="1">
    <location>
        <begin position="124"/>
        <end position="129"/>
    </location>
</feature>
<feature type="disulfide bond" evidence="1">
    <location>
        <begin position="184"/>
        <end position="231"/>
    </location>
</feature>
<feature type="disulfide bond" evidence="1">
    <location>
        <begin position="233"/>
        <end position="238"/>
    </location>
</feature>
<feature type="disulfide bond" evidence="1">
    <location>
        <begin position="279"/>
        <end position="292"/>
    </location>
</feature>
<feature type="disulfide bond" evidence="1">
    <location>
        <begin position="281"/>
        <end position="290"/>
    </location>
</feature>
<feature type="disulfide bond" evidence="1">
    <location>
        <begin position="318"/>
        <end position="335"/>
    </location>
</feature>
<feature type="disulfide bond" evidence="1">
    <location>
        <begin position="421"/>
        <end position="447"/>
    </location>
</feature>
<name>NRAM_I06A0</name>
<reference key="1">
    <citation type="submission" date="2008-07" db="EMBL/GenBank/DDBJ databases">
        <title>The NIAID influenza genome sequencing project.</title>
        <authorList>
            <person name="Spiro D."/>
            <person name="Halpin R."/>
            <person name="Boyne A."/>
            <person name="Bera J."/>
            <person name="Ghedin E."/>
            <person name="Hostetler J."/>
            <person name="Fedorova N."/>
            <person name="Hine E."/>
            <person name="Overton L."/>
            <person name="Djuric K."/>
            <person name="Sarmiento M."/>
            <person name="Sitz J."/>
            <person name="Katzel D."/>
            <person name="Manojkumar R."/>
            <person name="Devis R."/>
            <person name="Fulvini A."/>
            <person name="Silverman J."/>
            <person name="Le J."/>
            <person name="Kilbourne E.D."/>
            <person name="Pokorny B."/>
            <person name="Bucher D."/>
            <person name="Orff E."/>
            <person name="Minieri J."/>
            <person name="Onodera S."/>
            <person name="Huang L."/>
            <person name="Bao Y."/>
            <person name="Sanders R."/>
            <person name="Dernovoy D."/>
            <person name="Kiryutin B."/>
            <person name="Lipman D.J."/>
            <person name="Tatusova T."/>
        </authorList>
    </citation>
    <scope>NUCLEOTIDE SEQUENCE [GENOMIC RNA]</scope>
</reference>
<reference key="2">
    <citation type="submission" date="2008-07" db="EMBL/GenBank/DDBJ databases">
        <authorList>
            <consortium name="The NIAID Influenza Genome Sequencing Consortium"/>
        </authorList>
    </citation>
    <scope>NUCLEOTIDE SEQUENCE [GENOMIC RNA]</scope>
</reference>